<reference key="1">
    <citation type="journal article" date="2004" name="Science">
        <title>The Ashbya gossypii genome as a tool for mapping the ancient Saccharomyces cerevisiae genome.</title>
        <authorList>
            <person name="Dietrich F.S."/>
            <person name="Voegeli S."/>
            <person name="Brachat S."/>
            <person name="Lerch A."/>
            <person name="Gates K."/>
            <person name="Steiner S."/>
            <person name="Mohr C."/>
            <person name="Poehlmann R."/>
            <person name="Luedi P."/>
            <person name="Choi S."/>
            <person name="Wing R.A."/>
            <person name="Flavier A."/>
            <person name="Gaffney T.D."/>
            <person name="Philippsen P."/>
        </authorList>
    </citation>
    <scope>NUCLEOTIDE SEQUENCE [LARGE SCALE GENOMIC DNA]</scope>
    <source>
        <strain>ATCC 10895 / CBS 109.51 / FGSC 9923 / NRRL Y-1056</strain>
    </source>
</reference>
<reference key="2">
    <citation type="journal article" date="2013" name="G3 (Bethesda)">
        <title>Genomes of Ashbya fungi isolated from insects reveal four mating-type loci, numerous translocations, lack of transposons, and distinct gene duplications.</title>
        <authorList>
            <person name="Dietrich F.S."/>
            <person name="Voegeli S."/>
            <person name="Kuo S."/>
            <person name="Philippsen P."/>
        </authorList>
    </citation>
    <scope>GENOME REANNOTATION</scope>
    <source>
        <strain>ATCC 10895 / CBS 109.51 / FGSC 9923 / NRRL Y-1056</strain>
    </source>
</reference>
<comment type="function">
    <text evidence="1">Involved in the biogenesis of the 60S ribosomal subunit. May play a part in the quality control of pre-60S particles (By similarity).</text>
</comment>
<comment type="subunit">
    <text evidence="2">Component of the pre-66S ribosomal particle. Interacts with NOP7 and RRP1. Interacts with RSA4 (via WD repeats).</text>
</comment>
<comment type="subcellular location">
    <subcellularLocation>
        <location evidence="1">Nucleus</location>
        <location evidence="1">Nucleolus</location>
    </subcellularLocation>
</comment>
<comment type="similarity">
    <text evidence="5">Belongs to the eukaryotic ribosomal protein eS8 family. Ribosome biogenesis protein NSA2 subfamily.</text>
</comment>
<keyword id="KW-0539">Nucleus</keyword>
<keyword id="KW-1185">Reference proteome</keyword>
<keyword id="KW-0687">Ribonucleoprotein</keyword>
<keyword id="KW-0690">Ribosome biogenesis</keyword>
<keyword id="KW-0698">rRNA processing</keyword>
<organism>
    <name type="scientific">Eremothecium gossypii (strain ATCC 10895 / CBS 109.51 / FGSC 9923 / NRRL Y-1056)</name>
    <name type="common">Yeast</name>
    <name type="synonym">Ashbya gossypii</name>
    <dbReference type="NCBI Taxonomy" id="284811"/>
    <lineage>
        <taxon>Eukaryota</taxon>
        <taxon>Fungi</taxon>
        <taxon>Dikarya</taxon>
        <taxon>Ascomycota</taxon>
        <taxon>Saccharomycotina</taxon>
        <taxon>Saccharomycetes</taxon>
        <taxon>Saccharomycetales</taxon>
        <taxon>Saccharomycetaceae</taxon>
        <taxon>Eremothecium</taxon>
    </lineage>
</organism>
<proteinExistence type="inferred from homology"/>
<protein>
    <recommendedName>
        <fullName>Ribosome biogenesis protein NSA2</fullName>
    </recommendedName>
</protein>
<dbReference type="EMBL" id="AE016816">
    <property type="protein sequence ID" value="AAS51178.1"/>
    <property type="molecule type" value="Genomic_DNA"/>
</dbReference>
<dbReference type="RefSeq" id="NP_983354.1">
    <property type="nucleotide sequence ID" value="NM_208707.1"/>
</dbReference>
<dbReference type="SMR" id="Q75CG9"/>
<dbReference type="FunCoup" id="Q75CG9">
    <property type="interactions" value="1282"/>
</dbReference>
<dbReference type="STRING" id="284811.Q75CG9"/>
<dbReference type="EnsemblFungi" id="AAS51178">
    <property type="protein sequence ID" value="AAS51178"/>
    <property type="gene ID" value="AGOS_ACL050W"/>
</dbReference>
<dbReference type="GeneID" id="4619479"/>
<dbReference type="KEGG" id="ago:AGOS_ACL050W"/>
<dbReference type="eggNOG" id="KOG3163">
    <property type="taxonomic scope" value="Eukaryota"/>
</dbReference>
<dbReference type="HOGENOM" id="CLU_1070048_0_0_1"/>
<dbReference type="InParanoid" id="Q75CG9"/>
<dbReference type="OMA" id="TNTPEND"/>
<dbReference type="OrthoDB" id="1847590at2759"/>
<dbReference type="Proteomes" id="UP000000591">
    <property type="component" value="Chromosome III"/>
</dbReference>
<dbReference type="GO" id="GO:0005730">
    <property type="term" value="C:nucleolus"/>
    <property type="evidence" value="ECO:0007669"/>
    <property type="project" value="UniProtKB-SubCell"/>
</dbReference>
<dbReference type="GO" id="GO:0030687">
    <property type="term" value="C:preribosome, large subunit precursor"/>
    <property type="evidence" value="ECO:0000318"/>
    <property type="project" value="GO_Central"/>
</dbReference>
<dbReference type="GO" id="GO:0000460">
    <property type="term" value="P:maturation of 5.8S rRNA"/>
    <property type="evidence" value="ECO:0000318"/>
    <property type="project" value="GO_Central"/>
</dbReference>
<dbReference type="GO" id="GO:0000466">
    <property type="term" value="P:maturation of 5.8S rRNA from tricistronic rRNA transcript (SSU-rRNA, 5.8S rRNA, LSU-rRNA)"/>
    <property type="evidence" value="ECO:0007669"/>
    <property type="project" value="EnsemblFungi"/>
</dbReference>
<dbReference type="GO" id="GO:0000470">
    <property type="term" value="P:maturation of LSU-rRNA"/>
    <property type="evidence" value="ECO:0000318"/>
    <property type="project" value="GO_Central"/>
</dbReference>
<dbReference type="GO" id="GO:0000463">
    <property type="term" value="P:maturation of LSU-rRNA from tricistronic rRNA transcript (SSU-rRNA, 5.8S rRNA, LSU-rRNA)"/>
    <property type="evidence" value="ECO:0007669"/>
    <property type="project" value="EnsemblFungi"/>
</dbReference>
<dbReference type="CDD" id="cd11381">
    <property type="entry name" value="NSA2"/>
    <property type="match status" value="1"/>
</dbReference>
<dbReference type="FunFam" id="2.40.10.310:FF:000001">
    <property type="entry name" value="NSA2, ribosome biogenesis homolog"/>
    <property type="match status" value="1"/>
</dbReference>
<dbReference type="Gene3D" id="2.40.10.310">
    <property type="match status" value="1"/>
</dbReference>
<dbReference type="InterPro" id="IPR039411">
    <property type="entry name" value="NSA2_fam"/>
</dbReference>
<dbReference type="InterPro" id="IPR022309">
    <property type="entry name" value="Ribosomal_Se8/biogenesis_NSA2"/>
</dbReference>
<dbReference type="PANTHER" id="PTHR12642">
    <property type="entry name" value="RIBOSOME BIOGENESIS PROTEIN NSA2 HOMOLOG"/>
    <property type="match status" value="1"/>
</dbReference>
<dbReference type="Pfam" id="PF01201">
    <property type="entry name" value="Ribosomal_S8e"/>
    <property type="match status" value="1"/>
</dbReference>
<name>NSA2_EREGS</name>
<evidence type="ECO:0000250" key="1"/>
<evidence type="ECO:0000250" key="2">
    <source>
        <dbReference type="UniProtKB" id="P40078"/>
    </source>
</evidence>
<evidence type="ECO:0000255" key="3">
    <source>
        <dbReference type="PROSITE-ProRule" id="PRU00768"/>
    </source>
</evidence>
<evidence type="ECO:0000256" key="4">
    <source>
        <dbReference type="SAM" id="MobiDB-lite"/>
    </source>
</evidence>
<evidence type="ECO:0000305" key="5"/>
<feature type="chain" id="PRO_0000320408" description="Ribosome biogenesis protein NSA2">
    <location>
        <begin position="1"/>
        <end position="261"/>
    </location>
</feature>
<feature type="region of interest" description="Disordered" evidence="4">
    <location>
        <begin position="1"/>
        <end position="39"/>
    </location>
</feature>
<feature type="short sequence motif" description="Nuclear localization signal 1" evidence="3">
    <location>
        <begin position="11"/>
        <end position="18"/>
    </location>
</feature>
<feature type="short sequence motif" description="Nuclear localization signal 2" evidence="3">
    <location>
        <begin position="51"/>
        <end position="58"/>
    </location>
</feature>
<feature type="compositionally biased region" description="Basic and acidic residues" evidence="4">
    <location>
        <begin position="18"/>
        <end position="39"/>
    </location>
</feature>
<gene>
    <name type="primary">NSA2</name>
    <name type="ordered locus">ACL050W</name>
</gene>
<accession>Q75CG9</accession>
<sequence length="261" mass="29574">MPQNEYIEQHIKKHGRRLDHEERKRKREAREAHKISEKAQKLTGWKGKQFAKKRYAEKVAMRKKIKAHEQSKLKGAAKPLEDSGEALPAYLLDREQANSAKAISSSIKQKRLEKADKFSVPLPKVRGISEEEMFKVVKTGKSKTKSWKRMITKHTFVGEGFTRRPVKMERIIRPSALRQKKANVTHPELGVTVFLPILGVKKNPQSPMYTQLGVLTKGTIIEVNVSELGMVTSGGKVVWGKYAQITNEPDRDGCVNAVLLV</sequence>